<name>MAP1_STAAS</name>
<proteinExistence type="inferred from homology"/>
<organism>
    <name type="scientific">Staphylococcus aureus (strain MSSA476)</name>
    <dbReference type="NCBI Taxonomy" id="282459"/>
    <lineage>
        <taxon>Bacteria</taxon>
        <taxon>Bacillati</taxon>
        <taxon>Bacillota</taxon>
        <taxon>Bacilli</taxon>
        <taxon>Bacillales</taxon>
        <taxon>Staphylococcaceae</taxon>
        <taxon>Staphylococcus</taxon>
    </lineage>
</organism>
<sequence>MIVKTEEELQALKEIGYICAKVRNTMQAATKPGITTKELDNIAKELFEEYGAISAPIHDENFPGQTCISVNEEVAHGIPSKRVIREGDLVNIDVSALKNGYYADTGISFVVGESDDPMKQKVCDVATMAFENAIAKVKPGTKLSNIGKAVHNTARQNDLKVIKNLTGHGVGLSLHEAPAHVLNYFDPKDKTLLTEGMVLAIEPFISSNASFVTEGKNEWAFETSDKSFVAQIEHTVIVTKDGPILTTKIEEE</sequence>
<comment type="function">
    <text evidence="1">Removes the N-terminal methionine from nascent proteins. The N-terminal methionine is often cleaved when the second residue in the primary sequence is small and uncharged (Met-Ala-, Cys, Gly, Pro, Ser, Thr, or Val). Requires deformylation of the N(alpha)-formylated initiator methionine before it can be hydrolyzed.</text>
</comment>
<comment type="catalytic activity">
    <reaction evidence="1">
        <text>Release of N-terminal amino acids, preferentially methionine, from peptides and arylamides.</text>
        <dbReference type="EC" id="3.4.11.18"/>
    </reaction>
</comment>
<comment type="cofactor">
    <cofactor evidence="1">
        <name>Co(2+)</name>
        <dbReference type="ChEBI" id="CHEBI:48828"/>
    </cofactor>
    <cofactor evidence="1">
        <name>Zn(2+)</name>
        <dbReference type="ChEBI" id="CHEBI:29105"/>
    </cofactor>
    <cofactor evidence="1">
        <name>Mn(2+)</name>
        <dbReference type="ChEBI" id="CHEBI:29035"/>
    </cofactor>
    <cofactor evidence="1">
        <name>Fe(2+)</name>
        <dbReference type="ChEBI" id="CHEBI:29033"/>
    </cofactor>
    <text evidence="1">Binds 2 divalent metal cations per subunit. Has a high-affinity and a low affinity metal-binding site. The true nature of the physiological cofactor is under debate. The enzyme is active with cobalt, zinc, manganese or divalent iron ions. Most likely, methionine aminopeptidases function as mononuclear Fe(2+)-metalloproteases under physiological conditions, and the catalytically relevant metal-binding site has been assigned to the histidine-containing high-affinity site.</text>
</comment>
<comment type="subunit">
    <text evidence="1">Monomer.</text>
</comment>
<comment type="similarity">
    <text evidence="1">Belongs to the peptidase M24A family. Methionine aminopeptidase type 1 subfamily.</text>
</comment>
<evidence type="ECO:0000255" key="1">
    <source>
        <dbReference type="HAMAP-Rule" id="MF_01974"/>
    </source>
</evidence>
<dbReference type="EC" id="3.4.11.18" evidence="1"/>
<dbReference type="EMBL" id="BX571857">
    <property type="protein sequence ID" value="CAG43615.1"/>
    <property type="molecule type" value="Genomic_DNA"/>
</dbReference>
<dbReference type="RefSeq" id="WP_000636142.1">
    <property type="nucleotide sequence ID" value="NC_002953.3"/>
</dbReference>
<dbReference type="SMR" id="Q6G846"/>
<dbReference type="MEROPS" id="M24.036"/>
<dbReference type="KEGG" id="sas:SAS1810"/>
<dbReference type="HOGENOM" id="CLU_015857_0_2_9"/>
<dbReference type="GO" id="GO:0004239">
    <property type="term" value="F:initiator methionyl aminopeptidase activity"/>
    <property type="evidence" value="ECO:0007669"/>
    <property type="project" value="UniProtKB-UniRule"/>
</dbReference>
<dbReference type="GO" id="GO:0046872">
    <property type="term" value="F:metal ion binding"/>
    <property type="evidence" value="ECO:0007669"/>
    <property type="project" value="UniProtKB-UniRule"/>
</dbReference>
<dbReference type="GO" id="GO:0070006">
    <property type="term" value="F:metalloaminopeptidase activity"/>
    <property type="evidence" value="ECO:0007669"/>
    <property type="project" value="UniProtKB-UniRule"/>
</dbReference>
<dbReference type="GO" id="GO:0006508">
    <property type="term" value="P:proteolysis"/>
    <property type="evidence" value="ECO:0007669"/>
    <property type="project" value="UniProtKB-KW"/>
</dbReference>
<dbReference type="CDD" id="cd01086">
    <property type="entry name" value="MetAP1"/>
    <property type="match status" value="1"/>
</dbReference>
<dbReference type="Gene3D" id="3.90.230.10">
    <property type="entry name" value="Creatinase/methionine aminopeptidase superfamily"/>
    <property type="match status" value="1"/>
</dbReference>
<dbReference type="HAMAP" id="MF_01974">
    <property type="entry name" value="MetAP_1"/>
    <property type="match status" value="1"/>
</dbReference>
<dbReference type="InterPro" id="IPR036005">
    <property type="entry name" value="Creatinase/aminopeptidase-like"/>
</dbReference>
<dbReference type="InterPro" id="IPR000994">
    <property type="entry name" value="Pept_M24"/>
</dbReference>
<dbReference type="InterPro" id="IPR001714">
    <property type="entry name" value="Pept_M24_MAP"/>
</dbReference>
<dbReference type="InterPro" id="IPR002467">
    <property type="entry name" value="Pept_M24A_MAP1"/>
</dbReference>
<dbReference type="NCBIfam" id="TIGR00500">
    <property type="entry name" value="met_pdase_I"/>
    <property type="match status" value="1"/>
</dbReference>
<dbReference type="PANTHER" id="PTHR43330">
    <property type="entry name" value="METHIONINE AMINOPEPTIDASE"/>
    <property type="match status" value="1"/>
</dbReference>
<dbReference type="PANTHER" id="PTHR43330:SF13">
    <property type="entry name" value="METHIONINE AMINOPEPTIDASE 2"/>
    <property type="match status" value="1"/>
</dbReference>
<dbReference type="Pfam" id="PF00557">
    <property type="entry name" value="Peptidase_M24"/>
    <property type="match status" value="1"/>
</dbReference>
<dbReference type="PRINTS" id="PR00599">
    <property type="entry name" value="MAPEPTIDASE"/>
</dbReference>
<dbReference type="SUPFAM" id="SSF55920">
    <property type="entry name" value="Creatinase/aminopeptidase"/>
    <property type="match status" value="1"/>
</dbReference>
<accession>Q6G846</accession>
<gene>
    <name evidence="1" type="primary">map</name>
    <name type="ordered locus">SAS1810</name>
</gene>
<keyword id="KW-0031">Aminopeptidase</keyword>
<keyword id="KW-0378">Hydrolase</keyword>
<keyword id="KW-0479">Metal-binding</keyword>
<keyword id="KW-0645">Protease</keyword>
<reference key="1">
    <citation type="journal article" date="2004" name="Proc. Natl. Acad. Sci. U.S.A.">
        <title>Complete genomes of two clinical Staphylococcus aureus strains: evidence for the rapid evolution of virulence and drug resistance.</title>
        <authorList>
            <person name="Holden M.T.G."/>
            <person name="Feil E.J."/>
            <person name="Lindsay J.A."/>
            <person name="Peacock S.J."/>
            <person name="Day N.P.J."/>
            <person name="Enright M.C."/>
            <person name="Foster T.J."/>
            <person name="Moore C.E."/>
            <person name="Hurst L."/>
            <person name="Atkin R."/>
            <person name="Barron A."/>
            <person name="Bason N."/>
            <person name="Bentley S.D."/>
            <person name="Chillingworth C."/>
            <person name="Chillingworth T."/>
            <person name="Churcher C."/>
            <person name="Clark L."/>
            <person name="Corton C."/>
            <person name="Cronin A."/>
            <person name="Doggett J."/>
            <person name="Dowd L."/>
            <person name="Feltwell T."/>
            <person name="Hance Z."/>
            <person name="Harris B."/>
            <person name="Hauser H."/>
            <person name="Holroyd S."/>
            <person name="Jagels K."/>
            <person name="James K.D."/>
            <person name="Lennard N."/>
            <person name="Line A."/>
            <person name="Mayes R."/>
            <person name="Moule S."/>
            <person name="Mungall K."/>
            <person name="Ormond D."/>
            <person name="Quail M.A."/>
            <person name="Rabbinowitsch E."/>
            <person name="Rutherford K.M."/>
            <person name="Sanders M."/>
            <person name="Sharp S."/>
            <person name="Simmonds M."/>
            <person name="Stevens K."/>
            <person name="Whitehead S."/>
            <person name="Barrell B.G."/>
            <person name="Spratt B.G."/>
            <person name="Parkhill J."/>
        </authorList>
    </citation>
    <scope>NUCLEOTIDE SEQUENCE [LARGE SCALE GENOMIC DNA]</scope>
    <source>
        <strain>MSSA476</strain>
    </source>
</reference>
<protein>
    <recommendedName>
        <fullName evidence="1">Methionine aminopeptidase</fullName>
        <shortName evidence="1">MAP</shortName>
        <shortName evidence="1">MetAP</shortName>
        <ecNumber evidence="1">3.4.11.18</ecNumber>
    </recommendedName>
    <alternativeName>
        <fullName evidence="1">Peptidase M</fullName>
    </alternativeName>
</protein>
<feature type="chain" id="PRO_0000148958" description="Methionine aminopeptidase">
    <location>
        <begin position="1"/>
        <end position="252"/>
    </location>
</feature>
<feature type="binding site" evidence="1">
    <location>
        <position position="76"/>
    </location>
    <ligand>
        <name>substrate</name>
    </ligand>
</feature>
<feature type="binding site" evidence="1">
    <location>
        <position position="93"/>
    </location>
    <ligand>
        <name>a divalent metal cation</name>
        <dbReference type="ChEBI" id="CHEBI:60240"/>
        <label>1</label>
    </ligand>
</feature>
<feature type="binding site" evidence="1">
    <location>
        <position position="104"/>
    </location>
    <ligand>
        <name>a divalent metal cation</name>
        <dbReference type="ChEBI" id="CHEBI:60240"/>
        <label>1</label>
    </ligand>
</feature>
<feature type="binding site" evidence="1">
    <location>
        <position position="104"/>
    </location>
    <ligand>
        <name>a divalent metal cation</name>
        <dbReference type="ChEBI" id="CHEBI:60240"/>
        <label>2</label>
        <note>catalytic</note>
    </ligand>
</feature>
<feature type="binding site" evidence="1">
    <location>
        <position position="168"/>
    </location>
    <ligand>
        <name>a divalent metal cation</name>
        <dbReference type="ChEBI" id="CHEBI:60240"/>
        <label>2</label>
        <note>catalytic</note>
    </ligand>
</feature>
<feature type="binding site" evidence="1">
    <location>
        <position position="175"/>
    </location>
    <ligand>
        <name>substrate</name>
    </ligand>
</feature>
<feature type="binding site" evidence="1">
    <location>
        <position position="202"/>
    </location>
    <ligand>
        <name>a divalent metal cation</name>
        <dbReference type="ChEBI" id="CHEBI:60240"/>
        <label>2</label>
        <note>catalytic</note>
    </ligand>
</feature>
<feature type="binding site" evidence="1">
    <location>
        <position position="233"/>
    </location>
    <ligand>
        <name>a divalent metal cation</name>
        <dbReference type="ChEBI" id="CHEBI:60240"/>
        <label>1</label>
    </ligand>
</feature>
<feature type="binding site" evidence="1">
    <location>
        <position position="233"/>
    </location>
    <ligand>
        <name>a divalent metal cation</name>
        <dbReference type="ChEBI" id="CHEBI:60240"/>
        <label>2</label>
        <note>catalytic</note>
    </ligand>
</feature>